<proteinExistence type="inferred from homology"/>
<name>MLTF_SHESA</name>
<feature type="signal peptide" evidence="1">
    <location>
        <begin position="1"/>
        <end position="22"/>
    </location>
</feature>
<feature type="chain" id="PRO_0000353981" description="Membrane-bound lytic murein transglycosylase F">
    <location>
        <begin position="23"/>
        <end position="478"/>
    </location>
</feature>
<feature type="region of interest" description="Non-LT domain" evidence="1">
    <location>
        <begin position="23"/>
        <end position="257"/>
    </location>
</feature>
<feature type="region of interest" description="LT domain" evidence="1">
    <location>
        <begin position="258"/>
        <end position="478"/>
    </location>
</feature>
<feature type="region of interest" description="Disordered" evidence="2">
    <location>
        <begin position="446"/>
        <end position="478"/>
    </location>
</feature>
<feature type="compositionally biased region" description="Acidic residues" evidence="2">
    <location>
        <begin position="451"/>
        <end position="461"/>
    </location>
</feature>
<feature type="active site" evidence="1">
    <location>
        <position position="302"/>
    </location>
</feature>
<dbReference type="EC" id="4.2.2.n1" evidence="1"/>
<dbReference type="EMBL" id="CP000469">
    <property type="protein sequence ID" value="ABK47474.1"/>
    <property type="molecule type" value="Genomic_DNA"/>
</dbReference>
<dbReference type="RefSeq" id="WP_011716320.1">
    <property type="nucleotide sequence ID" value="NC_008577.1"/>
</dbReference>
<dbReference type="SMR" id="A0KUK5"/>
<dbReference type="STRING" id="94122.Shewana3_1239"/>
<dbReference type="CAZy" id="GH23">
    <property type="family name" value="Glycoside Hydrolase Family 23"/>
</dbReference>
<dbReference type="KEGG" id="shn:Shewana3_1239"/>
<dbReference type="eggNOG" id="COG4623">
    <property type="taxonomic scope" value="Bacteria"/>
</dbReference>
<dbReference type="HOGENOM" id="CLU_027494_0_1_6"/>
<dbReference type="OrthoDB" id="9815002at2"/>
<dbReference type="Proteomes" id="UP000002589">
    <property type="component" value="Chromosome"/>
</dbReference>
<dbReference type="GO" id="GO:0009279">
    <property type="term" value="C:cell outer membrane"/>
    <property type="evidence" value="ECO:0007669"/>
    <property type="project" value="UniProtKB-SubCell"/>
</dbReference>
<dbReference type="GO" id="GO:0008933">
    <property type="term" value="F:peptidoglycan lytic transglycosylase activity"/>
    <property type="evidence" value="ECO:0007669"/>
    <property type="project" value="UniProtKB-UniRule"/>
</dbReference>
<dbReference type="GO" id="GO:0016998">
    <property type="term" value="P:cell wall macromolecule catabolic process"/>
    <property type="evidence" value="ECO:0007669"/>
    <property type="project" value="UniProtKB-UniRule"/>
</dbReference>
<dbReference type="GO" id="GO:0071555">
    <property type="term" value="P:cell wall organization"/>
    <property type="evidence" value="ECO:0007669"/>
    <property type="project" value="UniProtKB-KW"/>
</dbReference>
<dbReference type="GO" id="GO:0009253">
    <property type="term" value="P:peptidoglycan catabolic process"/>
    <property type="evidence" value="ECO:0007669"/>
    <property type="project" value="TreeGrafter"/>
</dbReference>
<dbReference type="CDD" id="cd13403">
    <property type="entry name" value="MLTF-like"/>
    <property type="match status" value="1"/>
</dbReference>
<dbReference type="CDD" id="cd01009">
    <property type="entry name" value="PBP2_YfhD_N"/>
    <property type="match status" value="1"/>
</dbReference>
<dbReference type="FunFam" id="1.10.530.10:FF:000003">
    <property type="entry name" value="Membrane-bound lytic murein transglycosylase F"/>
    <property type="match status" value="1"/>
</dbReference>
<dbReference type="FunFam" id="3.40.190.10:FF:000325">
    <property type="entry name" value="Membrane-bound lytic murein transglycosylase F"/>
    <property type="match status" value="1"/>
</dbReference>
<dbReference type="Gene3D" id="1.10.530.10">
    <property type="match status" value="1"/>
</dbReference>
<dbReference type="Gene3D" id="3.40.190.10">
    <property type="entry name" value="Periplasmic binding protein-like II"/>
    <property type="match status" value="2"/>
</dbReference>
<dbReference type="HAMAP" id="MF_02016">
    <property type="entry name" value="MltF"/>
    <property type="match status" value="1"/>
</dbReference>
<dbReference type="InterPro" id="IPR023346">
    <property type="entry name" value="Lysozyme-like_dom_sf"/>
</dbReference>
<dbReference type="InterPro" id="IPR023703">
    <property type="entry name" value="MltF"/>
</dbReference>
<dbReference type="InterPro" id="IPR001638">
    <property type="entry name" value="Solute-binding_3/MltF_N"/>
</dbReference>
<dbReference type="InterPro" id="IPR008258">
    <property type="entry name" value="Transglycosylase_SLT_dom_1"/>
</dbReference>
<dbReference type="NCBIfam" id="NF008112">
    <property type="entry name" value="PRK10859.1"/>
    <property type="match status" value="1"/>
</dbReference>
<dbReference type="PANTHER" id="PTHR35936">
    <property type="entry name" value="MEMBRANE-BOUND LYTIC MUREIN TRANSGLYCOSYLASE F"/>
    <property type="match status" value="1"/>
</dbReference>
<dbReference type="PANTHER" id="PTHR35936:SF32">
    <property type="entry name" value="MEMBRANE-BOUND LYTIC MUREIN TRANSGLYCOSYLASE F"/>
    <property type="match status" value="1"/>
</dbReference>
<dbReference type="Pfam" id="PF00497">
    <property type="entry name" value="SBP_bac_3"/>
    <property type="match status" value="1"/>
</dbReference>
<dbReference type="Pfam" id="PF01464">
    <property type="entry name" value="SLT"/>
    <property type="match status" value="1"/>
</dbReference>
<dbReference type="SMART" id="SM00062">
    <property type="entry name" value="PBPb"/>
    <property type="match status" value="1"/>
</dbReference>
<dbReference type="SUPFAM" id="SSF53955">
    <property type="entry name" value="Lysozyme-like"/>
    <property type="match status" value="1"/>
</dbReference>
<dbReference type="SUPFAM" id="SSF53850">
    <property type="entry name" value="Periplasmic binding protein-like II"/>
    <property type="match status" value="1"/>
</dbReference>
<dbReference type="PROSITE" id="PS51257">
    <property type="entry name" value="PROKAR_LIPOPROTEIN"/>
    <property type="match status" value="1"/>
</dbReference>
<protein>
    <recommendedName>
        <fullName evidence="1">Membrane-bound lytic murein transglycosylase F</fullName>
        <ecNumber evidence="1">4.2.2.n1</ecNumber>
    </recommendedName>
    <alternativeName>
        <fullName evidence="1">Murein lyase F</fullName>
    </alternativeName>
</protein>
<sequence length="478" mass="54800">MTRFLFAIILGFLLTACQQVTVEETEYVPHKLTELRVGTLYGPQIYMTSGQGNSGFDYDMAVLFAEYLDVPLKMVPYTNRAELYDALKKNEIDIIAAGMTETPARREQFRLGPPLYRVNQVLVYREGMPTPKDITDLKGKITVIADSSFVETLTQLQKRHPTLVWDQVTDKDSEELLAMIANKEIDYTIADSSSVQINRRYLPDLRSGLVLEEKLDVVWLLPPTHSDGLMSQLLAFWHQEKLAGTLDHLNEKYFGHVKRFDYIDTRAFLRAIETVLPRYRQLFETHAGDLDWRKLAATSYQESHWNPNARSPTGVRGMMMLTQPTAKEIGITNRLDAEESIRGGAAYLRDMINRLPESIPESQRMWFALASYNIGYAHVEDARKLAESMELNPNAWRDLKKVLPLLQKRKYYQKTRYGYARGSEAVHYVDSIRRYYDTLVWVDNQSKQQNSDEEEPSDLASEDGPAPVPGTLSPDKPK</sequence>
<keyword id="KW-0998">Cell outer membrane</keyword>
<keyword id="KW-0961">Cell wall biogenesis/degradation</keyword>
<keyword id="KW-0456">Lyase</keyword>
<keyword id="KW-0472">Membrane</keyword>
<keyword id="KW-0732">Signal</keyword>
<comment type="function">
    <text evidence="1">Murein-degrading enzyme that degrades murein glycan strands and insoluble, high-molecular weight murein sacculi, with the concomitant formation of a 1,6-anhydromuramoyl product. Lytic transglycosylases (LTs) play an integral role in the metabolism of the peptidoglycan (PG) sacculus. Their lytic action creates space within the PG sacculus to allow for its expansion as well as for the insertion of various structures such as secretion systems and flagella.</text>
</comment>
<comment type="catalytic activity">
    <reaction evidence="1">
        <text>Exolytic cleavage of the (1-&gt;4)-beta-glycosidic linkage between N-acetylmuramic acid (MurNAc) and N-acetylglucosamine (GlcNAc) residues in peptidoglycan, from either the reducing or the non-reducing ends of the peptidoglycan chains, with concomitant formation of a 1,6-anhydrobond in the MurNAc residue.</text>
        <dbReference type="EC" id="4.2.2.n1"/>
    </reaction>
</comment>
<comment type="subcellular location">
    <subcellularLocation>
        <location>Cell outer membrane</location>
        <topology>Peripheral membrane protein</topology>
    </subcellularLocation>
    <text evidence="1">Attached to the inner leaflet of the outer membrane.</text>
</comment>
<comment type="domain">
    <text evidence="1">The N-terminal domain does not have lytic activity and probably modulates enzymatic activity. The C-terminal domain is the catalytic active domain.</text>
</comment>
<comment type="similarity">
    <text evidence="1">In the N-terminal section; belongs to the bacterial solute-binding protein 3 family.</text>
</comment>
<comment type="similarity">
    <text evidence="1">In the C-terminal section; belongs to the transglycosylase Slt family.</text>
</comment>
<organism>
    <name type="scientific">Shewanella sp. (strain ANA-3)</name>
    <dbReference type="NCBI Taxonomy" id="94122"/>
    <lineage>
        <taxon>Bacteria</taxon>
        <taxon>Pseudomonadati</taxon>
        <taxon>Pseudomonadota</taxon>
        <taxon>Gammaproteobacteria</taxon>
        <taxon>Alteromonadales</taxon>
        <taxon>Shewanellaceae</taxon>
        <taxon>Shewanella</taxon>
    </lineage>
</organism>
<evidence type="ECO:0000255" key="1">
    <source>
        <dbReference type="HAMAP-Rule" id="MF_02016"/>
    </source>
</evidence>
<evidence type="ECO:0000256" key="2">
    <source>
        <dbReference type="SAM" id="MobiDB-lite"/>
    </source>
</evidence>
<reference key="1">
    <citation type="submission" date="2006-09" db="EMBL/GenBank/DDBJ databases">
        <title>Complete sequence of chromosome 1 of Shewanella sp. ANA-3.</title>
        <authorList>
            <person name="Copeland A."/>
            <person name="Lucas S."/>
            <person name="Lapidus A."/>
            <person name="Barry K."/>
            <person name="Detter J.C."/>
            <person name="Glavina del Rio T."/>
            <person name="Hammon N."/>
            <person name="Israni S."/>
            <person name="Dalin E."/>
            <person name="Tice H."/>
            <person name="Pitluck S."/>
            <person name="Chertkov O."/>
            <person name="Brettin T."/>
            <person name="Bruce D."/>
            <person name="Han C."/>
            <person name="Tapia R."/>
            <person name="Gilna P."/>
            <person name="Schmutz J."/>
            <person name="Larimer F."/>
            <person name="Land M."/>
            <person name="Hauser L."/>
            <person name="Kyrpides N."/>
            <person name="Kim E."/>
            <person name="Newman D."/>
            <person name="Salticov C."/>
            <person name="Konstantinidis K."/>
            <person name="Klappenback J."/>
            <person name="Tiedje J."/>
            <person name="Richardson P."/>
        </authorList>
    </citation>
    <scope>NUCLEOTIDE SEQUENCE [LARGE SCALE GENOMIC DNA]</scope>
    <source>
        <strain>ANA-3</strain>
    </source>
</reference>
<gene>
    <name evidence="1" type="primary">mltF</name>
    <name type="ordered locus">Shewana3_1239</name>
</gene>
<accession>A0KUK5</accession>